<organism>
    <name type="scientific">Mus musculus</name>
    <name type="common">Mouse</name>
    <dbReference type="NCBI Taxonomy" id="10090"/>
    <lineage>
        <taxon>Eukaryota</taxon>
        <taxon>Metazoa</taxon>
        <taxon>Chordata</taxon>
        <taxon>Craniata</taxon>
        <taxon>Vertebrata</taxon>
        <taxon>Euteleostomi</taxon>
        <taxon>Mammalia</taxon>
        <taxon>Eutheria</taxon>
        <taxon>Euarchontoglires</taxon>
        <taxon>Glires</taxon>
        <taxon>Rodentia</taxon>
        <taxon>Myomorpha</taxon>
        <taxon>Muroidea</taxon>
        <taxon>Muridae</taxon>
        <taxon>Murinae</taxon>
        <taxon>Mus</taxon>
        <taxon>Mus</taxon>
    </lineage>
</organism>
<sequence length="471" mass="53306">MSVVHHLPPGWLLDHLSFINKVNYQLCQHQESFCSKNNPTSSVYMDSLQLDPGSPFGAPAMCFAPDFTTVSGNDDEGSCEVITEKYVFRSELFNVTKPYIVPAVHKERQQSNKNENLVTDYKQEVSVSVGKKRKRCIAFNQGELDAMEYHTKIRELILDGSSKLIQEGLRSGFLYPLVEKQDGSSGCITLPLDACNLSELCEMAKHLPSLNEMELQTLQLMGDDVSVIELDLSSQIIENNSSFSKMITLMGQKYLLPPQSSFLLSDISCMQPLLNCGKTFDAIVIDPPWENKSVKRSNRYSSLSPQQIKRMPIPKLAAADCLIVTWVTNRQKHLCFVKEELYPSWSVEVVAEWYWVKITNSGEFVFPLDSPHKKPYECLVLGRVKEKTPLALRNPDVRIPPVPDQKLIVSVPCVLHSHKPPLTEVLRDYIKPGGQCLELFARNLQPGWMSWGNEVLKFQHMDYFIALESGC</sequence>
<comment type="function">
    <text evidence="1 3">N(6)-adenine-specific methyltransferase that can methylate both RNAs and DNA (PubMed:30982744). Acts as a N(6)-adenine-specific RNA methyltransferase by catalyzing formation of N6,2'-O-dimethyladenosine (m6A(m)) on internal positions of U2 small nuclear RNA (snRNA): methylates the 6th position of adenine residues with a pre-deposited 2'-O-methylation (By similarity). Internal m6A(m) methylation of snRNAs regulates RNA splicing (By similarity). Also able to act as a N(6)-adenine-specific DNA methyltransferase by mediating methylation of DNA on the 6th position of adenine (N(6)-methyladenosine) (PubMed:30982744). The existence of N(6)-methyladenosine (m6A) on DNA is however unclear in mammals, and additional evidences are required to confirm the role of the N(6)-adenine-specific DNA methyltransferase activity of METTL4 in vivo (By similarity). Acts as a regulator of mitochondrial transcript levels and mitochondrial DNA (mtDNA) copy number by mediating mtDNA N(6)-methylation: m6A on mtDNA reduces transcription by repressing TFAM DNA-binding and bending (By similarity). N(6)-methyladenosine deposition by METTL4 regulates Polycomb silencing by triggering ubiquitination and degradation of sensor proteins ASXL1 and MPND, leading to inactivation of the PR-DUB complex and subsequent preservation of Polycomb silencing (PubMed:30982744).</text>
</comment>
<comment type="catalytic activity">
    <reaction evidence="1">
        <text>a 2'-O-methyladenosine in U2 snRNA + S-adenosyl-L-methionine = an N(6)-methyl-2'-O-methyladenosine in U2 snRNA + S-adenosyl-L-homocysteine + H(+)</text>
        <dbReference type="Rhea" id="RHEA:62672"/>
        <dbReference type="Rhea" id="RHEA-COMP:16150"/>
        <dbReference type="Rhea" id="RHEA-COMP:16151"/>
        <dbReference type="ChEBI" id="CHEBI:15378"/>
        <dbReference type="ChEBI" id="CHEBI:57856"/>
        <dbReference type="ChEBI" id="CHEBI:59789"/>
        <dbReference type="ChEBI" id="CHEBI:74477"/>
        <dbReference type="ChEBI" id="CHEBI:145853"/>
    </reaction>
    <physiologicalReaction direction="left-to-right" evidence="1">
        <dbReference type="Rhea" id="RHEA:62673"/>
    </physiologicalReaction>
</comment>
<comment type="catalytic activity">
    <reaction evidence="3">
        <text>a 2'-deoxyadenosine in DNA + S-adenosyl-L-methionine = an N(6)-methyl-2'-deoxyadenosine in DNA + S-adenosyl-L-homocysteine + H(+)</text>
        <dbReference type="Rhea" id="RHEA:15197"/>
        <dbReference type="Rhea" id="RHEA-COMP:12418"/>
        <dbReference type="Rhea" id="RHEA-COMP:12419"/>
        <dbReference type="ChEBI" id="CHEBI:15378"/>
        <dbReference type="ChEBI" id="CHEBI:57856"/>
        <dbReference type="ChEBI" id="CHEBI:59789"/>
        <dbReference type="ChEBI" id="CHEBI:90615"/>
        <dbReference type="ChEBI" id="CHEBI:90616"/>
        <dbReference type="EC" id="2.1.1.72"/>
    </reaction>
    <physiologicalReaction direction="left-to-right" evidence="3">
        <dbReference type="Rhea" id="RHEA:15198"/>
    </physiologicalReaction>
</comment>
<comment type="subcellular location">
    <subcellularLocation>
        <location evidence="1">Nucleus</location>
    </subcellularLocation>
</comment>
<comment type="disruption phenotype">
    <text evidence="3">Embryonic sublethality and craniofacial dysmorphism (PubMed:30982744). Surviving mice display anatomical defects, including anophthalmia and craniofacial dysmorphism (PubMed:30982744). Adult mice are moribund and exhibited splenomegaly with anemia and severe leukopenia, indicative of aberrant hematopoiesis (PubMed:30982744).</text>
</comment>
<comment type="similarity">
    <text evidence="2">Belongs to the MT-A70-like family.</text>
</comment>
<comment type="caution">
    <text evidence="1">The existence of N(6)-methyladenosine on DNA is unclear in mammals (By similarity). According to a report, the majority of N(6)-methyladenosine in DNA originates from RNA catabolism via a nucleotide salvage pathway and is misincorporated by DNA polymerases, arguing against a role as epigenetic DNA mark in mammalian cells (By similarity). Additional evidences are therefore required to confirm the role of METTL4 as a N(6)-adenine-specific DNA methyltransferase in vivo (By similarity).</text>
</comment>
<gene>
    <name evidence="4 6" type="primary">Mettl4</name>
</gene>
<feature type="chain" id="PRO_0000251226" description="N(6)-adenine-specific methyltransferase METTL4">
    <location>
        <begin position="1"/>
        <end position="471"/>
    </location>
</feature>
<feature type="mutagenesis site" description="Abolished methyltransferase activity." evidence="3">
    <original>PP</original>
    <variation>RR</variation>
    <location>
        <begin position="287"/>
        <end position="288"/>
    </location>
</feature>
<dbReference type="EC" id="2.1.1.72" evidence="3"/>
<dbReference type="EC" id="2.1.1.-" evidence="1"/>
<dbReference type="EMBL" id="AK157268">
    <property type="protein sequence ID" value="BAE34021.1"/>
    <property type="molecule type" value="mRNA"/>
</dbReference>
<dbReference type="CCDS" id="CCDS29030.1"/>
<dbReference type="RefSeq" id="NP_001344064.1">
    <property type="nucleotide sequence ID" value="NM_001357135.2"/>
</dbReference>
<dbReference type="RefSeq" id="NP_001344065.1">
    <property type="nucleotide sequence ID" value="NM_001357136.2"/>
</dbReference>
<dbReference type="RefSeq" id="NP_795891.2">
    <property type="nucleotide sequence ID" value="NM_176917.6"/>
</dbReference>
<dbReference type="RefSeq" id="XP_006525168.1">
    <property type="nucleotide sequence ID" value="XM_006525105.3"/>
</dbReference>
<dbReference type="RefSeq" id="XP_006525169.1">
    <property type="nucleotide sequence ID" value="XM_006525106.3"/>
</dbReference>
<dbReference type="SMR" id="Q3U034"/>
<dbReference type="FunCoup" id="Q3U034">
    <property type="interactions" value="2468"/>
</dbReference>
<dbReference type="STRING" id="10090.ENSMUSP00000157180"/>
<dbReference type="iPTMnet" id="Q3U034"/>
<dbReference type="PhosphoSitePlus" id="Q3U034"/>
<dbReference type="PaxDb" id="10090-ENSMUSP00000127142"/>
<dbReference type="ProteomicsDB" id="295545"/>
<dbReference type="Antibodypedia" id="21910">
    <property type="antibodies" value="115 antibodies from 24 providers"/>
</dbReference>
<dbReference type="Ensembl" id="ENSMUST00000234990.2">
    <property type="protein sequence ID" value="ENSMUSP00000157180.2"/>
    <property type="gene ID" value="ENSMUSG00000055660.10"/>
</dbReference>
<dbReference type="GeneID" id="76781"/>
<dbReference type="KEGG" id="mmu:76781"/>
<dbReference type="UCSC" id="uc008dwk.1">
    <property type="organism name" value="mouse"/>
</dbReference>
<dbReference type="AGR" id="MGI:1924031"/>
<dbReference type="CTD" id="64863"/>
<dbReference type="MGI" id="MGI:1924031">
    <property type="gene designation" value="Mettl4"/>
</dbReference>
<dbReference type="VEuPathDB" id="HostDB:ENSMUSG00000055660"/>
<dbReference type="eggNOG" id="KOG2356">
    <property type="taxonomic scope" value="Eukaryota"/>
</dbReference>
<dbReference type="GeneTree" id="ENSGT00390000016237"/>
<dbReference type="HOGENOM" id="CLU_027091_1_0_1"/>
<dbReference type="InParanoid" id="Q3U034"/>
<dbReference type="OMA" id="PLVQCGR"/>
<dbReference type="PhylomeDB" id="Q3U034"/>
<dbReference type="TreeFam" id="TF314410"/>
<dbReference type="BioGRID-ORCS" id="76781">
    <property type="hits" value="2 hits in 78 CRISPR screens"/>
</dbReference>
<dbReference type="ChiTaRS" id="Mettl4">
    <property type="organism name" value="mouse"/>
</dbReference>
<dbReference type="PRO" id="PR:Q3U034"/>
<dbReference type="Proteomes" id="UP000000589">
    <property type="component" value="Chromosome 17"/>
</dbReference>
<dbReference type="RNAct" id="Q3U034">
    <property type="molecule type" value="protein"/>
</dbReference>
<dbReference type="Bgee" id="ENSMUSG00000055660">
    <property type="expression patterns" value="Expressed in superior cervical ganglion and 212 other cell types or tissues"/>
</dbReference>
<dbReference type="ExpressionAtlas" id="Q3U034">
    <property type="expression patterns" value="baseline and differential"/>
</dbReference>
<dbReference type="GO" id="GO:0005829">
    <property type="term" value="C:cytosol"/>
    <property type="evidence" value="ECO:0000250"/>
    <property type="project" value="UniProtKB"/>
</dbReference>
<dbReference type="GO" id="GO:0005759">
    <property type="term" value="C:mitochondrial matrix"/>
    <property type="evidence" value="ECO:0000250"/>
    <property type="project" value="UniProtKB"/>
</dbReference>
<dbReference type="GO" id="GO:0005634">
    <property type="term" value="C:nucleus"/>
    <property type="evidence" value="ECO:0000250"/>
    <property type="project" value="UniProtKB"/>
</dbReference>
<dbReference type="GO" id="GO:0003676">
    <property type="term" value="F:nucleic acid binding"/>
    <property type="evidence" value="ECO:0007669"/>
    <property type="project" value="InterPro"/>
</dbReference>
<dbReference type="GO" id="GO:0008173">
    <property type="term" value="F:RNA methyltransferase activity"/>
    <property type="evidence" value="ECO:0000250"/>
    <property type="project" value="UniProtKB"/>
</dbReference>
<dbReference type="GO" id="GO:0009007">
    <property type="term" value="F:site-specific DNA-methyltransferase (adenine-specific) activity"/>
    <property type="evidence" value="ECO:0000314"/>
    <property type="project" value="UniProtKB"/>
</dbReference>
<dbReference type="GO" id="GO:0106347">
    <property type="term" value="F:U2 snRNA 2'-O-methyladenosine m6 methyltransferase activity"/>
    <property type="evidence" value="ECO:0007669"/>
    <property type="project" value="RHEA"/>
</dbReference>
<dbReference type="GO" id="GO:0032259">
    <property type="term" value="P:methylation"/>
    <property type="evidence" value="ECO:0007669"/>
    <property type="project" value="UniProtKB-KW"/>
</dbReference>
<dbReference type="GO" id="GO:0045814">
    <property type="term" value="P:negative regulation of gene expression, epigenetic"/>
    <property type="evidence" value="ECO:0000314"/>
    <property type="project" value="UniProtKB"/>
</dbReference>
<dbReference type="GO" id="GO:0090296">
    <property type="term" value="P:regulation of mitochondrial DNA replication"/>
    <property type="evidence" value="ECO:0000250"/>
    <property type="project" value="UniProtKB"/>
</dbReference>
<dbReference type="GO" id="GO:1903108">
    <property type="term" value="P:regulation of mitochondrial transcription"/>
    <property type="evidence" value="ECO:0000250"/>
    <property type="project" value="UniProtKB"/>
</dbReference>
<dbReference type="GO" id="GO:0043484">
    <property type="term" value="P:regulation of RNA splicing"/>
    <property type="evidence" value="ECO:0000250"/>
    <property type="project" value="UniProtKB"/>
</dbReference>
<dbReference type="GO" id="GO:0120049">
    <property type="term" value="P:snRNA (adenine-N6)-methylation"/>
    <property type="evidence" value="ECO:0000250"/>
    <property type="project" value="UniProtKB"/>
</dbReference>
<dbReference type="InterPro" id="IPR002052">
    <property type="entry name" value="DNA_methylase_N6_adenine_CS"/>
</dbReference>
<dbReference type="InterPro" id="IPR007757">
    <property type="entry name" value="MT-A70-like"/>
</dbReference>
<dbReference type="PANTHER" id="PTHR12829:SF4">
    <property type="entry name" value="N(6)-ADENINE-SPECIFIC METHYLTRANSFERASE METTL4"/>
    <property type="match status" value="1"/>
</dbReference>
<dbReference type="PANTHER" id="PTHR12829">
    <property type="entry name" value="N6-ADENOSINE-METHYLTRANSFERASE"/>
    <property type="match status" value="1"/>
</dbReference>
<dbReference type="Pfam" id="PF05063">
    <property type="entry name" value="MT-A70"/>
    <property type="match status" value="1"/>
</dbReference>
<dbReference type="PROSITE" id="PS51143">
    <property type="entry name" value="MT_A70"/>
    <property type="match status" value="1"/>
</dbReference>
<dbReference type="PROSITE" id="PS00092">
    <property type="entry name" value="N6_MTASE"/>
    <property type="match status" value="1"/>
</dbReference>
<proteinExistence type="evidence at protein level"/>
<evidence type="ECO:0000250" key="1">
    <source>
        <dbReference type="UniProtKB" id="Q8N3J2"/>
    </source>
</evidence>
<evidence type="ECO:0000255" key="2">
    <source>
        <dbReference type="PROSITE-ProRule" id="PRU00489"/>
    </source>
</evidence>
<evidence type="ECO:0000269" key="3">
    <source>
    </source>
</evidence>
<evidence type="ECO:0000303" key="4">
    <source>
    </source>
</evidence>
<evidence type="ECO:0000305" key="5"/>
<evidence type="ECO:0000312" key="6">
    <source>
        <dbReference type="MGI" id="MGI:1924031"/>
    </source>
</evidence>
<reference key="1">
    <citation type="journal article" date="2005" name="Science">
        <title>The transcriptional landscape of the mammalian genome.</title>
        <authorList>
            <person name="Carninci P."/>
            <person name="Kasukawa T."/>
            <person name="Katayama S."/>
            <person name="Gough J."/>
            <person name="Frith M.C."/>
            <person name="Maeda N."/>
            <person name="Oyama R."/>
            <person name="Ravasi T."/>
            <person name="Lenhard B."/>
            <person name="Wells C."/>
            <person name="Kodzius R."/>
            <person name="Shimokawa K."/>
            <person name="Bajic V.B."/>
            <person name="Brenner S.E."/>
            <person name="Batalov S."/>
            <person name="Forrest A.R."/>
            <person name="Zavolan M."/>
            <person name="Davis M.J."/>
            <person name="Wilming L.G."/>
            <person name="Aidinis V."/>
            <person name="Allen J.E."/>
            <person name="Ambesi-Impiombato A."/>
            <person name="Apweiler R."/>
            <person name="Aturaliya R.N."/>
            <person name="Bailey T.L."/>
            <person name="Bansal M."/>
            <person name="Baxter L."/>
            <person name="Beisel K.W."/>
            <person name="Bersano T."/>
            <person name="Bono H."/>
            <person name="Chalk A.M."/>
            <person name="Chiu K.P."/>
            <person name="Choudhary V."/>
            <person name="Christoffels A."/>
            <person name="Clutterbuck D.R."/>
            <person name="Crowe M.L."/>
            <person name="Dalla E."/>
            <person name="Dalrymple B.P."/>
            <person name="de Bono B."/>
            <person name="Della Gatta G."/>
            <person name="di Bernardo D."/>
            <person name="Down T."/>
            <person name="Engstrom P."/>
            <person name="Fagiolini M."/>
            <person name="Faulkner G."/>
            <person name="Fletcher C.F."/>
            <person name="Fukushima T."/>
            <person name="Furuno M."/>
            <person name="Futaki S."/>
            <person name="Gariboldi M."/>
            <person name="Georgii-Hemming P."/>
            <person name="Gingeras T.R."/>
            <person name="Gojobori T."/>
            <person name="Green R.E."/>
            <person name="Gustincich S."/>
            <person name="Harbers M."/>
            <person name="Hayashi Y."/>
            <person name="Hensch T.K."/>
            <person name="Hirokawa N."/>
            <person name="Hill D."/>
            <person name="Huminiecki L."/>
            <person name="Iacono M."/>
            <person name="Ikeo K."/>
            <person name="Iwama A."/>
            <person name="Ishikawa T."/>
            <person name="Jakt M."/>
            <person name="Kanapin A."/>
            <person name="Katoh M."/>
            <person name="Kawasawa Y."/>
            <person name="Kelso J."/>
            <person name="Kitamura H."/>
            <person name="Kitano H."/>
            <person name="Kollias G."/>
            <person name="Krishnan S.P."/>
            <person name="Kruger A."/>
            <person name="Kummerfeld S.K."/>
            <person name="Kurochkin I.V."/>
            <person name="Lareau L.F."/>
            <person name="Lazarevic D."/>
            <person name="Lipovich L."/>
            <person name="Liu J."/>
            <person name="Liuni S."/>
            <person name="McWilliam S."/>
            <person name="Madan Babu M."/>
            <person name="Madera M."/>
            <person name="Marchionni L."/>
            <person name="Matsuda H."/>
            <person name="Matsuzawa S."/>
            <person name="Miki H."/>
            <person name="Mignone F."/>
            <person name="Miyake S."/>
            <person name="Morris K."/>
            <person name="Mottagui-Tabar S."/>
            <person name="Mulder N."/>
            <person name="Nakano N."/>
            <person name="Nakauchi H."/>
            <person name="Ng P."/>
            <person name="Nilsson R."/>
            <person name="Nishiguchi S."/>
            <person name="Nishikawa S."/>
            <person name="Nori F."/>
            <person name="Ohara O."/>
            <person name="Okazaki Y."/>
            <person name="Orlando V."/>
            <person name="Pang K.C."/>
            <person name="Pavan W.J."/>
            <person name="Pavesi G."/>
            <person name="Pesole G."/>
            <person name="Petrovsky N."/>
            <person name="Piazza S."/>
            <person name="Reed J."/>
            <person name="Reid J.F."/>
            <person name="Ring B.Z."/>
            <person name="Ringwald M."/>
            <person name="Rost B."/>
            <person name="Ruan Y."/>
            <person name="Salzberg S.L."/>
            <person name="Sandelin A."/>
            <person name="Schneider C."/>
            <person name="Schoenbach C."/>
            <person name="Sekiguchi K."/>
            <person name="Semple C.A."/>
            <person name="Seno S."/>
            <person name="Sessa L."/>
            <person name="Sheng Y."/>
            <person name="Shibata Y."/>
            <person name="Shimada H."/>
            <person name="Shimada K."/>
            <person name="Silva D."/>
            <person name="Sinclair B."/>
            <person name="Sperling S."/>
            <person name="Stupka E."/>
            <person name="Sugiura K."/>
            <person name="Sultana R."/>
            <person name="Takenaka Y."/>
            <person name="Taki K."/>
            <person name="Tammoja K."/>
            <person name="Tan S.L."/>
            <person name="Tang S."/>
            <person name="Taylor M.S."/>
            <person name="Tegner J."/>
            <person name="Teichmann S.A."/>
            <person name="Ueda H.R."/>
            <person name="van Nimwegen E."/>
            <person name="Verardo R."/>
            <person name="Wei C.L."/>
            <person name="Yagi K."/>
            <person name="Yamanishi H."/>
            <person name="Zabarovsky E."/>
            <person name="Zhu S."/>
            <person name="Zimmer A."/>
            <person name="Hide W."/>
            <person name="Bult C."/>
            <person name="Grimmond S.M."/>
            <person name="Teasdale R.D."/>
            <person name="Liu E.T."/>
            <person name="Brusic V."/>
            <person name="Quackenbush J."/>
            <person name="Wahlestedt C."/>
            <person name="Mattick J.S."/>
            <person name="Hume D.A."/>
            <person name="Kai C."/>
            <person name="Sasaki D."/>
            <person name="Tomaru Y."/>
            <person name="Fukuda S."/>
            <person name="Kanamori-Katayama M."/>
            <person name="Suzuki M."/>
            <person name="Aoki J."/>
            <person name="Arakawa T."/>
            <person name="Iida J."/>
            <person name="Imamura K."/>
            <person name="Itoh M."/>
            <person name="Kato T."/>
            <person name="Kawaji H."/>
            <person name="Kawagashira N."/>
            <person name="Kawashima T."/>
            <person name="Kojima M."/>
            <person name="Kondo S."/>
            <person name="Konno H."/>
            <person name="Nakano K."/>
            <person name="Ninomiya N."/>
            <person name="Nishio T."/>
            <person name="Okada M."/>
            <person name="Plessy C."/>
            <person name="Shibata K."/>
            <person name="Shiraki T."/>
            <person name="Suzuki S."/>
            <person name="Tagami M."/>
            <person name="Waki K."/>
            <person name="Watahiki A."/>
            <person name="Okamura-Oho Y."/>
            <person name="Suzuki H."/>
            <person name="Kawai J."/>
            <person name="Hayashizaki Y."/>
        </authorList>
    </citation>
    <scope>NUCLEOTIDE SEQUENCE [LARGE SCALE MRNA]</scope>
    <source>
        <strain>NOD</strain>
        <tissue>Spleen</tissue>
    </source>
</reference>
<reference key="2">
    <citation type="journal article" date="2019" name="Mol. Cell">
        <title>An adversarial DNA N6-methyladenine-sensor network preserves Polycomb silencing.</title>
        <authorList>
            <person name="Kweon S.M."/>
            <person name="Chen Y."/>
            <person name="Moon E."/>
            <person name="Kvederaviciute K."/>
            <person name="Klimasauskas S."/>
            <person name="Feldman D.E."/>
        </authorList>
    </citation>
    <scope>FUNCTION</scope>
    <scope>CATALYTIC ACTIVITY</scope>
    <scope>DISRUPTION PHENOTYPE</scope>
    <scope>MUTAGENESIS OF 287-PRO-PRO-288</scope>
</reference>
<accession>Q3U034</accession>
<name>METL4_MOUSE</name>
<protein>
    <recommendedName>
        <fullName evidence="5">N(6)-adenine-specific methyltransferase METTL4</fullName>
    </recommendedName>
    <alternativeName>
        <fullName>Methyltransferase-like protein 4</fullName>
    </alternativeName>
    <alternativeName>
        <fullName evidence="5">N(6)-adenine-specific DNA methyltransferase METTL4</fullName>
        <ecNumber evidence="3">2.1.1.72</ecNumber>
    </alternativeName>
    <alternativeName>
        <fullName evidence="5">snRNA (2'-O-methyladenosine-N(6)-)-methyltransferase METTL4</fullName>
        <ecNumber evidence="1">2.1.1.-</ecNumber>
    </alternativeName>
</protein>
<keyword id="KW-0156">Chromatin regulator</keyword>
<keyword id="KW-0489">Methyltransferase</keyword>
<keyword id="KW-0539">Nucleus</keyword>
<keyword id="KW-1185">Reference proteome</keyword>
<keyword id="KW-0949">S-adenosyl-L-methionine</keyword>
<keyword id="KW-0808">Transferase</keyword>